<name>ZIPA_ECTM1</name>
<organism>
    <name type="scientific">Ectopseudomonas mendocina (strain ymp)</name>
    <name type="common">Pseudomonas mendocina</name>
    <dbReference type="NCBI Taxonomy" id="399739"/>
    <lineage>
        <taxon>Bacteria</taxon>
        <taxon>Pseudomonadati</taxon>
        <taxon>Pseudomonadota</taxon>
        <taxon>Gammaproteobacteria</taxon>
        <taxon>Pseudomonadales</taxon>
        <taxon>Pseudomonadaceae</taxon>
        <taxon>Ectopseudomonas</taxon>
    </lineage>
</organism>
<proteinExistence type="inferred from homology"/>
<feature type="chain" id="PRO_1000015149" description="Cell division protein ZipA">
    <location>
        <begin position="1"/>
        <end position="273"/>
    </location>
</feature>
<feature type="topological domain" description="Periplasmic" evidence="1">
    <location>
        <position position="1"/>
    </location>
</feature>
<feature type="transmembrane region" description="Helical" evidence="1">
    <location>
        <begin position="2"/>
        <end position="22"/>
    </location>
</feature>
<feature type="topological domain" description="Cytoplasmic" evidence="1">
    <location>
        <begin position="23"/>
        <end position="273"/>
    </location>
</feature>
<feature type="region of interest" description="Disordered" evidence="2">
    <location>
        <begin position="65"/>
        <end position="125"/>
    </location>
</feature>
<feature type="compositionally biased region" description="Basic and acidic residues" evidence="2">
    <location>
        <begin position="111"/>
        <end position="120"/>
    </location>
</feature>
<dbReference type="EMBL" id="CP000680">
    <property type="protein sequence ID" value="ABP85502.1"/>
    <property type="molecule type" value="Genomic_DNA"/>
</dbReference>
<dbReference type="SMR" id="A4XVY6"/>
<dbReference type="STRING" id="399739.Pmen_2747"/>
<dbReference type="KEGG" id="pmy:Pmen_2747"/>
<dbReference type="PATRIC" id="fig|399739.8.peg.2778"/>
<dbReference type="eggNOG" id="COG3115">
    <property type="taxonomic scope" value="Bacteria"/>
</dbReference>
<dbReference type="HOGENOM" id="CLU_030174_0_1_6"/>
<dbReference type="OrthoDB" id="7054914at2"/>
<dbReference type="GO" id="GO:0032153">
    <property type="term" value="C:cell division site"/>
    <property type="evidence" value="ECO:0007669"/>
    <property type="project" value="UniProtKB-UniRule"/>
</dbReference>
<dbReference type="GO" id="GO:0005886">
    <property type="term" value="C:plasma membrane"/>
    <property type="evidence" value="ECO:0007669"/>
    <property type="project" value="UniProtKB-SubCell"/>
</dbReference>
<dbReference type="GO" id="GO:0000917">
    <property type="term" value="P:division septum assembly"/>
    <property type="evidence" value="ECO:0007669"/>
    <property type="project" value="TreeGrafter"/>
</dbReference>
<dbReference type="GO" id="GO:0043093">
    <property type="term" value="P:FtsZ-dependent cytokinesis"/>
    <property type="evidence" value="ECO:0007669"/>
    <property type="project" value="UniProtKB-UniRule"/>
</dbReference>
<dbReference type="Gene3D" id="3.30.1400.10">
    <property type="entry name" value="ZipA, C-terminal FtsZ-binding domain"/>
    <property type="match status" value="1"/>
</dbReference>
<dbReference type="HAMAP" id="MF_00509">
    <property type="entry name" value="ZipA"/>
    <property type="match status" value="1"/>
</dbReference>
<dbReference type="InterPro" id="IPR011919">
    <property type="entry name" value="Cell_div_ZipA"/>
</dbReference>
<dbReference type="InterPro" id="IPR007449">
    <property type="entry name" value="ZipA_FtsZ-bd_C"/>
</dbReference>
<dbReference type="InterPro" id="IPR036765">
    <property type="entry name" value="ZipA_FtsZ-bd_C_sf"/>
</dbReference>
<dbReference type="NCBIfam" id="TIGR02205">
    <property type="entry name" value="septum_zipA"/>
    <property type="match status" value="1"/>
</dbReference>
<dbReference type="PANTHER" id="PTHR38685">
    <property type="entry name" value="CELL DIVISION PROTEIN ZIPA"/>
    <property type="match status" value="1"/>
</dbReference>
<dbReference type="PANTHER" id="PTHR38685:SF1">
    <property type="entry name" value="CELL DIVISION PROTEIN ZIPA"/>
    <property type="match status" value="1"/>
</dbReference>
<dbReference type="Pfam" id="PF04354">
    <property type="entry name" value="ZipA_C"/>
    <property type="match status" value="1"/>
</dbReference>
<dbReference type="SMART" id="SM00771">
    <property type="entry name" value="ZipA_C"/>
    <property type="match status" value="1"/>
</dbReference>
<dbReference type="SUPFAM" id="SSF64383">
    <property type="entry name" value="Cell-division protein ZipA, C-terminal domain"/>
    <property type="match status" value="1"/>
</dbReference>
<comment type="function">
    <text evidence="1">Essential cell division protein that stabilizes the FtsZ protofilaments by cross-linking them and that serves as a cytoplasmic membrane anchor for the Z ring. Also required for the recruitment to the septal ring of downstream cell division proteins.</text>
</comment>
<comment type="subunit">
    <text evidence="1">Interacts with FtsZ via their C-terminal domains.</text>
</comment>
<comment type="subcellular location">
    <subcellularLocation>
        <location evidence="1">Cell inner membrane</location>
        <topology evidence="1">Single-pass type I membrane protein</topology>
    </subcellularLocation>
    <text evidence="1">Localizes to the Z ring in an FtsZ-dependent manner.</text>
</comment>
<comment type="similarity">
    <text evidence="1">Belongs to the ZipA family.</text>
</comment>
<gene>
    <name evidence="1" type="primary">zipA</name>
    <name type="ordered locus">Pmen_2747</name>
</gene>
<evidence type="ECO:0000255" key="1">
    <source>
        <dbReference type="HAMAP-Rule" id="MF_00509"/>
    </source>
</evidence>
<evidence type="ECO:0000256" key="2">
    <source>
        <dbReference type="SAM" id="MobiDB-lite"/>
    </source>
</evidence>
<sequence length="273" mass="30737">MEFGLREWLIVIGIIVIAGILFDGWRRMRGGKGRLKFKLDRSFANMPDDDSDPDLLSPPRVVKREMEPQLDEDDLPSMSAKELPRRSRNEPQQGDLNLAVDEPVPTLLNPVDDKPQEPKKSAKLSAEAAPVEEVLVINVVARDDLGFKGPALLQNILESGLRFGEMDIFHRHESMAGNGEVLFSMANALKPGTFDLDDIEGFSTRAVSFFLSLPGPRHPKQAFDVMVAAARKLAHELGGELKDDQRSVMTAQTIEHYRQRIVEFERRQLTQKR</sequence>
<keyword id="KW-0131">Cell cycle</keyword>
<keyword id="KW-0132">Cell division</keyword>
<keyword id="KW-0997">Cell inner membrane</keyword>
<keyword id="KW-1003">Cell membrane</keyword>
<keyword id="KW-0472">Membrane</keyword>
<keyword id="KW-0812">Transmembrane</keyword>
<keyword id="KW-1133">Transmembrane helix</keyword>
<protein>
    <recommendedName>
        <fullName evidence="1">Cell division protein ZipA</fullName>
    </recommendedName>
</protein>
<reference key="1">
    <citation type="submission" date="2007-04" db="EMBL/GenBank/DDBJ databases">
        <title>Complete sequence of Pseudomonas mendocina ymp.</title>
        <authorList>
            <consortium name="US DOE Joint Genome Institute"/>
            <person name="Copeland A."/>
            <person name="Lucas S."/>
            <person name="Lapidus A."/>
            <person name="Barry K."/>
            <person name="Glavina del Rio T."/>
            <person name="Dalin E."/>
            <person name="Tice H."/>
            <person name="Pitluck S."/>
            <person name="Kiss H."/>
            <person name="Brettin T."/>
            <person name="Detter J.C."/>
            <person name="Bruce D."/>
            <person name="Han C."/>
            <person name="Schmutz J."/>
            <person name="Larimer F."/>
            <person name="Land M."/>
            <person name="Hauser L."/>
            <person name="Kyrpides N."/>
            <person name="Mikhailova N."/>
            <person name="Hersman L."/>
            <person name="Dubois J."/>
            <person name="Maurice P."/>
            <person name="Richardson P."/>
        </authorList>
    </citation>
    <scope>NUCLEOTIDE SEQUENCE [LARGE SCALE GENOMIC DNA]</scope>
    <source>
        <strain>ymp</strain>
    </source>
</reference>
<accession>A4XVY6</accession>